<name>SECA_STRGR</name>
<protein>
    <recommendedName>
        <fullName evidence="1">Protein translocase subunit SecA</fullName>
        <ecNumber evidence="1">7.4.2.8</ecNumber>
    </recommendedName>
</protein>
<proteinExistence type="evidence at protein level"/>
<gene>
    <name evidence="1" type="primary">secA</name>
</gene>
<organism>
    <name type="scientific">Streptomyces griseus</name>
    <dbReference type="NCBI Taxonomy" id="1911"/>
    <lineage>
        <taxon>Bacteria</taxon>
        <taxon>Bacillati</taxon>
        <taxon>Actinomycetota</taxon>
        <taxon>Actinomycetes</taxon>
        <taxon>Kitasatosporales</taxon>
        <taxon>Streptomycetaceae</taxon>
        <taxon>Streptomyces</taxon>
    </lineage>
</organism>
<comment type="function">
    <text evidence="1">Part of the Sec protein translocase complex. Interacts with the SecYEG preprotein conducting channel. Has a central role in coupling the hydrolysis of ATP to the transfer of proteins into and across the cell membrane, serving as an ATP-driven molecular motor driving the stepwise translocation of polypeptide chains across the membrane.</text>
</comment>
<comment type="catalytic activity">
    <reaction evidence="1">
        <text>ATP + H2O + cellular proteinSide 1 = ADP + phosphate + cellular proteinSide 2.</text>
        <dbReference type="EC" id="7.4.2.8"/>
    </reaction>
</comment>
<comment type="subunit">
    <text evidence="1">Monomer and homodimer. Part of the essential Sec protein translocation apparatus which comprises SecA, SecYEG and auxiliary proteins SecDF. Other proteins may also be involved.</text>
</comment>
<comment type="subcellular location">
    <subcellularLocation>
        <location evidence="1">Cell membrane</location>
        <topology evidence="1">Peripheral membrane protein</topology>
        <orientation evidence="1">Cytoplasmic side</orientation>
    </subcellularLocation>
    <subcellularLocation>
        <location evidence="1">Cytoplasm</location>
    </subcellularLocation>
    <text evidence="1">Distribution is 50-50.</text>
</comment>
<comment type="induction">
    <text>No mRNA is detectable in stationary phase cells; the protein is subject to protein degradation in stationary phase.</text>
</comment>
<comment type="miscellaneous">
    <text>Does not complement E.coli temperature-sensitive secA mutants.</text>
</comment>
<comment type="similarity">
    <text evidence="1">Belongs to the SecA family.</text>
</comment>
<keyword id="KW-0067">ATP-binding</keyword>
<keyword id="KW-1003">Cell membrane</keyword>
<keyword id="KW-0963">Cytoplasm</keyword>
<keyword id="KW-0472">Membrane</keyword>
<keyword id="KW-0547">Nucleotide-binding</keyword>
<keyword id="KW-0653">Protein transport</keyword>
<keyword id="KW-1278">Translocase</keyword>
<keyword id="KW-0811">Translocation</keyword>
<keyword id="KW-0813">Transport</keyword>
<evidence type="ECO:0000255" key="1">
    <source>
        <dbReference type="HAMAP-Rule" id="MF_01382"/>
    </source>
</evidence>
<evidence type="ECO:0000256" key="2">
    <source>
        <dbReference type="SAM" id="MobiDB-lite"/>
    </source>
</evidence>
<feature type="chain" id="PRO_0000109614" description="Protein translocase subunit SecA">
    <location>
        <begin position="1"/>
        <end position="940"/>
    </location>
</feature>
<feature type="region of interest" description="Disordered" evidence="2">
    <location>
        <begin position="851"/>
        <end position="940"/>
    </location>
</feature>
<feature type="compositionally biased region" description="Basic and acidic residues" evidence="2">
    <location>
        <begin position="855"/>
        <end position="865"/>
    </location>
</feature>
<feature type="compositionally biased region" description="Basic residues" evidence="2">
    <location>
        <begin position="928"/>
        <end position="940"/>
    </location>
</feature>
<feature type="binding site" evidence="1">
    <location>
        <position position="85"/>
    </location>
    <ligand>
        <name>ATP</name>
        <dbReference type="ChEBI" id="CHEBI:30616"/>
    </ligand>
</feature>
<feature type="binding site" evidence="1">
    <location>
        <begin position="103"/>
        <end position="107"/>
    </location>
    <ligand>
        <name>ATP</name>
        <dbReference type="ChEBI" id="CHEBI:30616"/>
    </ligand>
</feature>
<feature type="binding site" evidence="1">
    <location>
        <position position="505"/>
    </location>
    <ligand>
        <name>ATP</name>
        <dbReference type="ChEBI" id="CHEBI:30616"/>
    </ligand>
</feature>
<dbReference type="EC" id="7.4.2.8" evidence="1"/>
<dbReference type="EMBL" id="Y10980">
    <property type="protein sequence ID" value="CAA71873.1"/>
    <property type="molecule type" value="Genomic_DNA"/>
</dbReference>
<dbReference type="SMR" id="P95759"/>
<dbReference type="STRING" id="1911.GCA_001715295_04386"/>
<dbReference type="GO" id="GO:0031522">
    <property type="term" value="C:cell envelope Sec protein transport complex"/>
    <property type="evidence" value="ECO:0007669"/>
    <property type="project" value="TreeGrafter"/>
</dbReference>
<dbReference type="GO" id="GO:0005829">
    <property type="term" value="C:cytosol"/>
    <property type="evidence" value="ECO:0007669"/>
    <property type="project" value="TreeGrafter"/>
</dbReference>
<dbReference type="GO" id="GO:0005886">
    <property type="term" value="C:plasma membrane"/>
    <property type="evidence" value="ECO:0007669"/>
    <property type="project" value="UniProtKB-SubCell"/>
</dbReference>
<dbReference type="GO" id="GO:0005524">
    <property type="term" value="F:ATP binding"/>
    <property type="evidence" value="ECO:0007669"/>
    <property type="project" value="UniProtKB-UniRule"/>
</dbReference>
<dbReference type="GO" id="GO:0008564">
    <property type="term" value="F:protein-exporting ATPase activity"/>
    <property type="evidence" value="ECO:0007669"/>
    <property type="project" value="UniProtKB-EC"/>
</dbReference>
<dbReference type="GO" id="GO:0065002">
    <property type="term" value="P:intracellular protein transmembrane transport"/>
    <property type="evidence" value="ECO:0007669"/>
    <property type="project" value="UniProtKB-UniRule"/>
</dbReference>
<dbReference type="GO" id="GO:0017038">
    <property type="term" value="P:protein import"/>
    <property type="evidence" value="ECO:0007669"/>
    <property type="project" value="InterPro"/>
</dbReference>
<dbReference type="GO" id="GO:0006605">
    <property type="term" value="P:protein targeting"/>
    <property type="evidence" value="ECO:0007669"/>
    <property type="project" value="UniProtKB-UniRule"/>
</dbReference>
<dbReference type="GO" id="GO:0043952">
    <property type="term" value="P:protein transport by the Sec complex"/>
    <property type="evidence" value="ECO:0007669"/>
    <property type="project" value="TreeGrafter"/>
</dbReference>
<dbReference type="CDD" id="cd17928">
    <property type="entry name" value="DEXDc_SecA"/>
    <property type="match status" value="1"/>
</dbReference>
<dbReference type="CDD" id="cd18803">
    <property type="entry name" value="SF2_C_secA"/>
    <property type="match status" value="1"/>
</dbReference>
<dbReference type="FunFam" id="1.10.3060.10:FF:000002">
    <property type="entry name" value="Preprotein translocase subunit SecA"/>
    <property type="match status" value="1"/>
</dbReference>
<dbReference type="FunFam" id="3.40.50.300:FF:000113">
    <property type="entry name" value="Preprotein translocase subunit SecA"/>
    <property type="match status" value="1"/>
</dbReference>
<dbReference type="FunFam" id="3.40.50.300:FF:000334">
    <property type="entry name" value="Protein translocase subunit SecA"/>
    <property type="match status" value="1"/>
</dbReference>
<dbReference type="FunFam" id="3.90.1440.10:FF:000002">
    <property type="entry name" value="Protein translocase subunit SecA"/>
    <property type="match status" value="1"/>
</dbReference>
<dbReference type="Gene3D" id="1.10.3060.10">
    <property type="entry name" value="Helical scaffold and wing domains of SecA"/>
    <property type="match status" value="1"/>
</dbReference>
<dbReference type="Gene3D" id="3.40.50.300">
    <property type="entry name" value="P-loop containing nucleotide triphosphate hydrolases"/>
    <property type="match status" value="2"/>
</dbReference>
<dbReference type="Gene3D" id="3.90.1440.10">
    <property type="entry name" value="SecA, preprotein cross-linking domain"/>
    <property type="match status" value="1"/>
</dbReference>
<dbReference type="HAMAP" id="MF_01382">
    <property type="entry name" value="SecA"/>
    <property type="match status" value="1"/>
</dbReference>
<dbReference type="InterPro" id="IPR014001">
    <property type="entry name" value="Helicase_ATP-bd"/>
</dbReference>
<dbReference type="InterPro" id="IPR001650">
    <property type="entry name" value="Helicase_C-like"/>
</dbReference>
<dbReference type="InterPro" id="IPR027417">
    <property type="entry name" value="P-loop_NTPase"/>
</dbReference>
<dbReference type="InterPro" id="IPR000185">
    <property type="entry name" value="SecA"/>
</dbReference>
<dbReference type="InterPro" id="IPR020937">
    <property type="entry name" value="SecA_CS"/>
</dbReference>
<dbReference type="InterPro" id="IPR011115">
    <property type="entry name" value="SecA_DEAD"/>
</dbReference>
<dbReference type="InterPro" id="IPR014018">
    <property type="entry name" value="SecA_motor_DEAD"/>
</dbReference>
<dbReference type="InterPro" id="IPR011130">
    <property type="entry name" value="SecA_preprotein_X-link_dom"/>
</dbReference>
<dbReference type="InterPro" id="IPR044722">
    <property type="entry name" value="SecA_SF2_C"/>
</dbReference>
<dbReference type="InterPro" id="IPR011116">
    <property type="entry name" value="SecA_Wing/Scaffold"/>
</dbReference>
<dbReference type="InterPro" id="IPR036266">
    <property type="entry name" value="SecA_Wing/Scaffold_sf"/>
</dbReference>
<dbReference type="InterPro" id="IPR036670">
    <property type="entry name" value="SecA_X-link_sf"/>
</dbReference>
<dbReference type="NCBIfam" id="NF009538">
    <property type="entry name" value="PRK12904.1"/>
    <property type="match status" value="1"/>
</dbReference>
<dbReference type="NCBIfam" id="TIGR00963">
    <property type="entry name" value="secA"/>
    <property type="match status" value="1"/>
</dbReference>
<dbReference type="PANTHER" id="PTHR30612:SF0">
    <property type="entry name" value="CHLOROPLAST PROTEIN-TRANSPORTING ATPASE"/>
    <property type="match status" value="1"/>
</dbReference>
<dbReference type="PANTHER" id="PTHR30612">
    <property type="entry name" value="SECA INNER MEMBRANE COMPONENT OF SEC PROTEIN SECRETION SYSTEM"/>
    <property type="match status" value="1"/>
</dbReference>
<dbReference type="Pfam" id="PF21090">
    <property type="entry name" value="P-loop_SecA"/>
    <property type="match status" value="1"/>
</dbReference>
<dbReference type="Pfam" id="PF07517">
    <property type="entry name" value="SecA_DEAD"/>
    <property type="match status" value="1"/>
</dbReference>
<dbReference type="Pfam" id="PF01043">
    <property type="entry name" value="SecA_PP_bind"/>
    <property type="match status" value="1"/>
</dbReference>
<dbReference type="Pfam" id="PF07516">
    <property type="entry name" value="SecA_SW"/>
    <property type="match status" value="1"/>
</dbReference>
<dbReference type="PRINTS" id="PR00906">
    <property type="entry name" value="SECA"/>
</dbReference>
<dbReference type="SMART" id="SM00957">
    <property type="entry name" value="SecA_DEAD"/>
    <property type="match status" value="1"/>
</dbReference>
<dbReference type="SMART" id="SM00958">
    <property type="entry name" value="SecA_PP_bind"/>
    <property type="match status" value="1"/>
</dbReference>
<dbReference type="SUPFAM" id="SSF81886">
    <property type="entry name" value="Helical scaffold and wing domains of SecA"/>
    <property type="match status" value="1"/>
</dbReference>
<dbReference type="SUPFAM" id="SSF52540">
    <property type="entry name" value="P-loop containing nucleoside triphosphate hydrolases"/>
    <property type="match status" value="2"/>
</dbReference>
<dbReference type="SUPFAM" id="SSF81767">
    <property type="entry name" value="Pre-protein crosslinking domain of SecA"/>
    <property type="match status" value="1"/>
</dbReference>
<dbReference type="PROSITE" id="PS01312">
    <property type="entry name" value="SECA"/>
    <property type="match status" value="1"/>
</dbReference>
<dbReference type="PROSITE" id="PS51196">
    <property type="entry name" value="SECA_MOTOR_DEAD"/>
    <property type="match status" value="1"/>
</dbReference>
<accession>P95759</accession>
<sequence length="940" mass="105178">MSVFNKLMRAGEGKILRKLHRIADQVSSIEEDFVNLSDAELRALTDEYKERYADGESLDDLLPEAFATVREAAKRVLGQRHYDVQMMGGVALHLGYVAEMKTGEGKTLVGTLPAYLNALSGKGVHLITVNDYLAERDSELMGRVHKFLGLSVGCIVANMTPAQRREQYGCDITYGTNNEFGFDYLRDNMAWSKDELVQRGHNFAVVDEVDSILVDEARTPLIISGPADQPPSGTADFAKLVTRLTKGEAGNQLKGIEETGDYEVDEKKRTVAIHEAGVAKVEDWLGIDNLYESVNTPLVGYLNNAIKAKELFKKDKDYVVIDGEVMIVDEHTGRILAGRRYNEGMHQAIEAKEGVDIKDENQTLATITLQQNFFRLYDKLSGMTGTAMTEAAEFHQIYKLGVVPIPTNRPMVRADQSDLIYRTEVAKFAAVVDDIAEKHEKGQPILVGTTSVEKSEYLSQQLSKRGVQHEVLNAKQHDREATIVAQAGRKGAVTVATNMAGRGTDIKLGGNPDDLAEAELRQRGLDPVENVEEWAAALPAALETAEQAVKAEFEEVKDLGGLYVLGTERHESRRIDNQLRGRSGRQGDPGESRFYLSLGDDLMRLFKAQMVERVMSMANVPDDVPIENKMVTRAIASAQSQVEQQNFETRKNVLKYDEVLNRQREVIYGERRRVLEGEDLQEQIRHFMDDTIDDYIRQETAEGFAEEWDLDRLWGAFKQLYPVKVTVDELEEAAGDLAGVTAEFIAESVKNDIHEQYEERENTLGSDIMRELEPRWVLSVLDRKWREHLYEMDYLQEGIGLRAMAQKDPLVEYQREGFDMFNAMMEGIKEESVGYLFNLEVQVEQQVEEVPVQDGAERPSLEKEGATAAPQIRAKGLEAPQRPDRLHFSAPTVDGEGGVVEGDFANDEATGDTRSGSADGMTRADAARRRKGGGGRRRKK</sequence>
<reference key="1">
    <citation type="journal article" date="1997" name="FEMS Microbiol. Lett.">
        <title>Protein secretion in Streptomyces griseus N2-3-11: characterization of the secA gene and its growth phase-dependent expression.</title>
        <authorList>
            <person name="Poehling S."/>
            <person name="Piepersberg W."/>
            <person name="Wehmeier U.F."/>
        </authorList>
    </citation>
    <scope>NUCLEOTIDE SEQUENCE [GENOMIC DNA]</scope>
    <scope>PROTEIN LEVELS</scope>
    <scope>CHARACTERIZATION OF LACK OF COMPLEMENTATION IN E.COLI</scope>
    <source>
        <strain>N2-3-11</strain>
    </source>
</reference>